<proteinExistence type="inferred from homology"/>
<gene>
    <name type="primary">dmaW2</name>
</gene>
<organism>
    <name type="scientific">Epichloe coenophiala</name>
    <name type="common">Tall fescue endophyte fungus</name>
    <name type="synonym">Neotyphodium coenophialum</name>
    <dbReference type="NCBI Taxonomy" id="5047"/>
    <lineage>
        <taxon>Eukaryota</taxon>
        <taxon>Fungi</taxon>
        <taxon>Dikarya</taxon>
        <taxon>Ascomycota</taxon>
        <taxon>Pezizomycotina</taxon>
        <taxon>Sordariomycetes</taxon>
        <taxon>Hypocreomycetidae</taxon>
        <taxon>Hypocreales</taxon>
        <taxon>Clavicipitaceae</taxon>
        <taxon>Epichloe</taxon>
    </lineage>
</organism>
<sequence length="450" mass="52226">MVLAKTLHQEVYQTLSETFDFANNDQRLWWHSTAPMFQKILQTANYSIYAQYQHLSIYKSHIIPFLGVYPTRSGERWLSILTRYGTPFELSLNCSDSIVRYTYEPINAATGSHLDPFNTFAIWEALKKLIDSQPGIDLQWFSYFKQELTLDANESTYLHSQNLVKEQIKTQNKLALDLKGDKFVLKTYIYPELKSVATGKSVQELVFGSVRKLAQKHKSIRPAFEMLEDYVQSRNKVPTTDDSHNTPLSSRLLSCDLVSPTKSRVKIYLLERMVSLPAMEDLWTLGGRREDQSTIEGLEMIRELWGLLNMSPGLRAYPEPYLPLGAIPNEQLPSMANYTLHHNDPIPEPQVYFTVFGMNDMEVTNALTKFFMRHEWSDMASKYKACLRESFPHHNYEALNYIHSYISFSYRNNKPYLSVYLHSFETGEWPVFPEGLIAFDGCRRDLTCYK</sequence>
<comment type="function">
    <text evidence="1">Catalyzes the first step of ergot alkaloid biosynthesis. Ergot alkaloids, which are produced by endophyte fungi, can enhance plant host fitness, but also cause livestock toxicosis to host plants (By similarity).</text>
</comment>
<comment type="catalytic activity">
    <reaction>
        <text>L-tryptophan + dimethylallyl diphosphate = 4-(3-methylbut-2-enyl)-L-tryptophan + diphosphate</text>
        <dbReference type="Rhea" id="RHEA:14173"/>
        <dbReference type="ChEBI" id="CHEBI:33019"/>
        <dbReference type="ChEBI" id="CHEBI:57623"/>
        <dbReference type="ChEBI" id="CHEBI:57912"/>
        <dbReference type="ChEBI" id="CHEBI:58209"/>
        <dbReference type="EC" id="2.5.1.34"/>
    </reaction>
</comment>
<comment type="pathway">
    <text>Alkaloid biosynthesis; ergot alkaloid biosynthesis.</text>
</comment>
<comment type="subunit">
    <text evidence="1">Homodimer.</text>
</comment>
<comment type="similarity">
    <text evidence="3">Belongs to the tryptophan dimethylallyltransferase family.</text>
</comment>
<keyword id="KW-0017">Alkaloid metabolism</keyword>
<keyword id="KW-0808">Transferase</keyword>
<evidence type="ECO:0000250" key="1"/>
<evidence type="ECO:0000250" key="2">
    <source>
        <dbReference type="UniProtKB" id="Q50EL0"/>
    </source>
</evidence>
<evidence type="ECO:0000305" key="3"/>
<name>DMAW2_EPICN</name>
<accession>Q6X2E1</accession>
<reference key="1">
    <citation type="journal article" date="2004" name="Fungal Genet. Biol.">
        <title>The determinant step in ergot alkaloid biosynthesis by an endophyte of perennial ryegrass.</title>
        <authorList>
            <person name="Wang J."/>
            <person name="Machado C."/>
            <person name="Panaccione D.G."/>
            <person name="Tsai H.-F."/>
            <person name="Schardl C.L."/>
        </authorList>
    </citation>
    <scope>NUCLEOTIDE SEQUENCE [GENOMIC DNA]</scope>
</reference>
<protein>
    <recommendedName>
        <fullName>Tryptophan dimethylallyltransferase 2</fullName>
        <ecNumber>2.5.1.34</ecNumber>
    </recommendedName>
    <alternativeName>
        <fullName>4-dimethylallyltryptophan synthase 2</fullName>
    </alternativeName>
    <alternativeName>
        <fullName>All-trans-hexaprenyl-diphosphate synthase 2</fullName>
    </alternativeName>
    <alternativeName>
        <fullName>L-tryptophan dimethylallyl transferase 2</fullName>
        <shortName>DMATS 2</shortName>
    </alternativeName>
</protein>
<dbReference type="EC" id="2.5.1.34"/>
<dbReference type="EMBL" id="AY259839">
    <property type="protein sequence ID" value="AAP81208.1"/>
    <property type="molecule type" value="Genomic_DNA"/>
</dbReference>
<dbReference type="SMR" id="Q6X2E1"/>
<dbReference type="UniPathway" id="UPA00327"/>
<dbReference type="GO" id="GO:0050364">
    <property type="term" value="F:tryptophan dimethylallyltransferase activity"/>
    <property type="evidence" value="ECO:0007669"/>
    <property type="project" value="UniProtKB-EC"/>
</dbReference>
<dbReference type="GO" id="GO:0035837">
    <property type="term" value="P:ergot alkaloid biosynthetic process"/>
    <property type="evidence" value="ECO:0007669"/>
    <property type="project" value="InterPro"/>
</dbReference>
<dbReference type="CDD" id="cd13929">
    <property type="entry name" value="PT-DMATS_CymD"/>
    <property type="match status" value="1"/>
</dbReference>
<dbReference type="InterPro" id="IPR033964">
    <property type="entry name" value="Aro_prenylTrfase"/>
</dbReference>
<dbReference type="InterPro" id="IPR017795">
    <property type="entry name" value="Aro_prenylTrfase_DMATS"/>
</dbReference>
<dbReference type="InterPro" id="IPR012148">
    <property type="entry name" value="DMATS-type_fun"/>
</dbReference>
<dbReference type="InterPro" id="IPR017796">
    <property type="entry name" value="Trp_dimethylallylTrfase"/>
</dbReference>
<dbReference type="NCBIfam" id="TIGR03429">
    <property type="entry name" value="arom_pren_DMATS"/>
    <property type="match status" value="1"/>
</dbReference>
<dbReference type="NCBIfam" id="TIGR03430">
    <property type="entry name" value="trp_dimet_allyl"/>
    <property type="match status" value="1"/>
</dbReference>
<dbReference type="PANTHER" id="PTHR40627">
    <property type="entry name" value="INDOLE PRENYLTRANSFERASE TDIB-RELATED"/>
    <property type="match status" value="1"/>
</dbReference>
<dbReference type="PANTHER" id="PTHR40627:SF3">
    <property type="entry name" value="PRENYLTRANSFERASE ASQH2-RELATED"/>
    <property type="match status" value="1"/>
</dbReference>
<dbReference type="Pfam" id="PF11991">
    <property type="entry name" value="Trp_DMAT"/>
    <property type="match status" value="1"/>
</dbReference>
<dbReference type="PIRSF" id="PIRSF000509">
    <property type="entry name" value="Trp_DMAT"/>
    <property type="match status" value="1"/>
</dbReference>
<dbReference type="SFLD" id="SFLDS00036">
    <property type="entry name" value="Aromatic_Prenyltransferase"/>
    <property type="match status" value="1"/>
</dbReference>
<dbReference type="SFLD" id="SFLDG01162">
    <property type="entry name" value="I"/>
    <property type="match status" value="1"/>
</dbReference>
<feature type="chain" id="PRO_0000181361" description="Tryptophan dimethylallyltransferase 2">
    <location>
        <begin position="1"/>
        <end position="450"/>
    </location>
</feature>
<feature type="binding site" evidence="2">
    <location>
        <begin position="80"/>
        <end position="81"/>
    </location>
    <ligand>
        <name>L-tryptophan</name>
        <dbReference type="ChEBI" id="CHEBI:57912"/>
    </ligand>
</feature>
<feature type="binding site" evidence="2">
    <location>
        <position position="89"/>
    </location>
    <ligand>
        <name>L-tryptophan</name>
        <dbReference type="ChEBI" id="CHEBI:57912"/>
    </ligand>
</feature>
<feature type="binding site" evidence="2">
    <location>
        <position position="100"/>
    </location>
    <ligand>
        <name>substrate</name>
    </ligand>
</feature>
<feature type="binding site" evidence="2">
    <location>
        <position position="186"/>
    </location>
    <ligand>
        <name>substrate</name>
    </ligand>
</feature>
<feature type="binding site" evidence="2">
    <location>
        <position position="188"/>
    </location>
    <ligand>
        <name>substrate</name>
    </ligand>
</feature>
<feature type="binding site" evidence="2">
    <location>
        <position position="190"/>
    </location>
    <ligand>
        <name>L-tryptophan</name>
        <dbReference type="ChEBI" id="CHEBI:57912"/>
    </ligand>
</feature>
<feature type="binding site" evidence="2">
    <location>
        <position position="251"/>
    </location>
    <ligand>
        <name>L-tryptophan</name>
        <dbReference type="ChEBI" id="CHEBI:57912"/>
    </ligand>
</feature>
<feature type="binding site" evidence="2">
    <location>
        <position position="264"/>
    </location>
    <ligand>
        <name>substrate</name>
    </ligand>
</feature>
<feature type="binding site" evidence="2">
    <location>
        <position position="266"/>
    </location>
    <ligand>
        <name>substrate</name>
    </ligand>
</feature>
<feature type="binding site" evidence="2">
    <location>
        <position position="268"/>
    </location>
    <ligand>
        <name>substrate</name>
    </ligand>
</feature>
<feature type="binding site" evidence="2">
    <location>
        <position position="350"/>
    </location>
    <ligand>
        <name>substrate</name>
    </ligand>
</feature>
<feature type="binding site" evidence="2">
    <location>
        <position position="352"/>
    </location>
    <ligand>
        <name>substrate</name>
    </ligand>
</feature>
<feature type="binding site" evidence="2">
    <location>
        <position position="416"/>
    </location>
    <ligand>
        <name>substrate</name>
    </ligand>
</feature>
<feature type="binding site" evidence="2">
    <location>
        <position position="420"/>
    </location>
    <ligand>
        <name>substrate</name>
    </ligand>
</feature>